<accession>P0DQZ0</accession>
<reference key="1">
    <citation type="journal article" date="2023" name="Int. J. Mol. Sci.">
        <title>Characterization of the first animal toxin acting as an antagonist on AT1 receptor.</title>
        <authorList>
            <person name="Van Baelen A.C."/>
            <person name="Iturrioz X."/>
            <person name="Chaigneau M."/>
            <person name="Kessler P."/>
            <person name="Llorens-Cortes C."/>
            <person name="Servent D."/>
            <person name="Gilles N."/>
            <person name="Robin P."/>
        </authorList>
    </citation>
    <scope>PROTEIN SEQUENCE</scope>
    <scope>SUBCELLULAR LOCATION</scope>
    <scope>DISULFIDE BOND</scope>
    <scope>SYNTHESIS</scope>
    <source>
        <tissue>Venom</tissue>
    </source>
</reference>
<dbReference type="GO" id="GO:0005576">
    <property type="term" value="C:extracellular region"/>
    <property type="evidence" value="ECO:0007669"/>
    <property type="project" value="UniProtKB-SubCell"/>
</dbReference>
<dbReference type="GO" id="GO:0090729">
    <property type="term" value="F:toxin activity"/>
    <property type="evidence" value="ECO:0007669"/>
    <property type="project" value="UniProtKB-KW"/>
</dbReference>
<keyword id="KW-0903">Direct protein sequencing</keyword>
<keyword id="KW-1015">Disulfide bond</keyword>
<keyword id="KW-1213">G-protein coupled receptor impairing toxin</keyword>
<keyword id="KW-0964">Secreted</keyword>
<keyword id="KW-0800">Toxin</keyword>
<comment type="function">
    <text evidence="1">Cyclic peptide that displays a 100-fold selectivity for type-1 angiotensin II receptor AT1 (AGTR1) over AT2. Interacts at high nanomolar range affinity. Binds to the extracellular side of the receptors. Shows a competitive antagonism mode of action on AT1, blocking G-alpha (q), G-alpha (i3), G-alpha (oA), beta-arrestin 2 pathways and ERK1/2 activation.</text>
</comment>
<comment type="subcellular location">
    <subcellularLocation>
        <location evidence="1">Secreted</location>
    </subcellularLocation>
</comment>
<comment type="tissue specificity">
    <text evidence="4">Expressed by the venom duct.</text>
</comment>
<comment type="domain">
    <text evidence="3">The cysteine framework is C-C.</text>
</comment>
<comment type="miscellaneous">
    <text evidence="1">Negative results: does not have effect on endothelin type A (EDNRA), endothelin type B (EDNRB), apelin (APLNR), vasopressin type 1a (AVPR1A) and vasopressin type 2 (AVPR2) receptors.</text>
</comment>
<feature type="peptide" id="PRO_0000458108" description="A-conotoxin cyclic Mila" evidence="1">
    <location>
        <begin position="1"/>
        <end position="7"/>
    </location>
</feature>
<feature type="disulfide bond" evidence="1">
    <location>
        <begin position="1"/>
        <end position="6"/>
    </location>
</feature>
<proteinExistence type="evidence at protein level"/>
<protein>
    <recommendedName>
        <fullName evidence="4">A-conotoxin cyclic Mila</fullName>
        <shortName evidence="2">A-CTX-cMila</shortName>
    </recommendedName>
</protein>
<name>CX1A_CONML</name>
<evidence type="ECO:0000269" key="1">
    <source>
    </source>
</evidence>
<evidence type="ECO:0000303" key="2">
    <source>
    </source>
</evidence>
<evidence type="ECO:0000305" key="3"/>
<evidence type="ECO:0000305" key="4">
    <source>
    </source>
</evidence>
<organism>
    <name type="scientific">Conus miliaris</name>
    <name type="common">Thousand-spot cone</name>
    <dbReference type="NCBI Taxonomy" id="97181"/>
    <lineage>
        <taxon>Eukaryota</taxon>
        <taxon>Metazoa</taxon>
        <taxon>Spiralia</taxon>
        <taxon>Lophotrochozoa</taxon>
        <taxon>Mollusca</taxon>
        <taxon>Gastropoda</taxon>
        <taxon>Caenogastropoda</taxon>
        <taxon>Neogastropoda</taxon>
        <taxon>Conoidea</taxon>
        <taxon>Conidae</taxon>
        <taxon>Conus</taxon>
        <taxon>Virroconus</taxon>
    </lineage>
</organism>
<sequence length="7" mass="891">CHFWVCP</sequence>